<proteinExistence type="inferred from homology"/>
<comment type="function">
    <text evidence="2">GTP hydrolase that promotes the GTP-dependent binding of aminoacyl-tRNA to the A-site of ribosomes during protein biosynthesis.</text>
</comment>
<comment type="catalytic activity">
    <reaction evidence="2">
        <text>GTP + H2O = GDP + phosphate + H(+)</text>
        <dbReference type="Rhea" id="RHEA:19669"/>
        <dbReference type="ChEBI" id="CHEBI:15377"/>
        <dbReference type="ChEBI" id="CHEBI:15378"/>
        <dbReference type="ChEBI" id="CHEBI:37565"/>
        <dbReference type="ChEBI" id="CHEBI:43474"/>
        <dbReference type="ChEBI" id="CHEBI:58189"/>
        <dbReference type="EC" id="3.6.5.3"/>
    </reaction>
    <physiologicalReaction direction="left-to-right" evidence="2">
        <dbReference type="Rhea" id="RHEA:19670"/>
    </physiologicalReaction>
</comment>
<comment type="subunit">
    <text evidence="2">Monomer.</text>
</comment>
<comment type="subcellular location">
    <subcellularLocation>
        <location evidence="2">Cytoplasm</location>
    </subcellularLocation>
</comment>
<comment type="similarity">
    <text evidence="2">Belongs to the TRAFAC class translation factor GTPase superfamily. Classic translation factor GTPase family. EF-Tu/EF-1A subfamily.</text>
</comment>
<sequence length="396" mass="43031">MAKEKFERNKPHCNIGTIGHVDHGKTTLTAAITIILAKSGGATAKNYADIDAAPEEKARGITINTAHVEYETANRHYAHVDCPGHADYVKNMITGAAQMDGAILVVSAADGPMPQTREHILLARQVGVPALVVYMNKVDLVDDEELLELVEMEVRELLSSYDFPGDDIPITKGSAKVAIDGGDPVIGEQSILALMKTVDDYIPQPDRPIDLPFLMPVEDVFSISGRGTVVTGRIEKGVVKVGEEVEIVGIRAVQKTTCTGVEMFRKLLDQGQAGDNVGVLLRGTKREDVERGQVLCKPGSITPHTKFVAEAYILTKEEGGRHTPFFTNYRPQFYFRTTDVTGIIKLREGVEMIMPGDNAELDVELITPIAMDQGLRFAIREGGRTVGAGVVAKIVE</sequence>
<evidence type="ECO:0000250" key="1"/>
<evidence type="ECO:0000255" key="2">
    <source>
        <dbReference type="HAMAP-Rule" id="MF_00118"/>
    </source>
</evidence>
<accession>B0SUQ7</accession>
<keyword id="KW-0963">Cytoplasm</keyword>
<keyword id="KW-0251">Elongation factor</keyword>
<keyword id="KW-0342">GTP-binding</keyword>
<keyword id="KW-0378">Hydrolase</keyword>
<keyword id="KW-0460">Magnesium</keyword>
<keyword id="KW-0479">Metal-binding</keyword>
<keyword id="KW-0547">Nucleotide-binding</keyword>
<keyword id="KW-0648">Protein biosynthesis</keyword>
<dbReference type="EC" id="3.6.5.3" evidence="2"/>
<dbReference type="EMBL" id="CP000927">
    <property type="protein sequence ID" value="ABZ69935.1"/>
    <property type="molecule type" value="Genomic_DNA"/>
</dbReference>
<dbReference type="SMR" id="B0SUQ7"/>
<dbReference type="STRING" id="366602.Caul_0804"/>
<dbReference type="KEGG" id="cak:Caul_0804"/>
<dbReference type="eggNOG" id="COG0050">
    <property type="taxonomic scope" value="Bacteria"/>
</dbReference>
<dbReference type="HOGENOM" id="CLU_007265_0_1_5"/>
<dbReference type="OrthoDB" id="9803139at2"/>
<dbReference type="GO" id="GO:0005829">
    <property type="term" value="C:cytosol"/>
    <property type="evidence" value="ECO:0007669"/>
    <property type="project" value="TreeGrafter"/>
</dbReference>
<dbReference type="GO" id="GO:0005525">
    <property type="term" value="F:GTP binding"/>
    <property type="evidence" value="ECO:0007669"/>
    <property type="project" value="UniProtKB-UniRule"/>
</dbReference>
<dbReference type="GO" id="GO:0003924">
    <property type="term" value="F:GTPase activity"/>
    <property type="evidence" value="ECO:0007669"/>
    <property type="project" value="InterPro"/>
</dbReference>
<dbReference type="GO" id="GO:0097216">
    <property type="term" value="F:guanosine tetraphosphate binding"/>
    <property type="evidence" value="ECO:0007669"/>
    <property type="project" value="UniProtKB-ARBA"/>
</dbReference>
<dbReference type="GO" id="GO:0003746">
    <property type="term" value="F:translation elongation factor activity"/>
    <property type="evidence" value="ECO:0007669"/>
    <property type="project" value="UniProtKB-UniRule"/>
</dbReference>
<dbReference type="CDD" id="cd01884">
    <property type="entry name" value="EF_Tu"/>
    <property type="match status" value="1"/>
</dbReference>
<dbReference type="CDD" id="cd03697">
    <property type="entry name" value="EFTU_II"/>
    <property type="match status" value="1"/>
</dbReference>
<dbReference type="CDD" id="cd03707">
    <property type="entry name" value="EFTU_III"/>
    <property type="match status" value="1"/>
</dbReference>
<dbReference type="FunFam" id="2.40.30.10:FF:000001">
    <property type="entry name" value="Elongation factor Tu"/>
    <property type="match status" value="1"/>
</dbReference>
<dbReference type="FunFam" id="3.40.50.300:FF:000003">
    <property type="entry name" value="Elongation factor Tu"/>
    <property type="match status" value="1"/>
</dbReference>
<dbReference type="Gene3D" id="3.40.50.300">
    <property type="entry name" value="P-loop containing nucleotide triphosphate hydrolases"/>
    <property type="match status" value="1"/>
</dbReference>
<dbReference type="Gene3D" id="2.40.30.10">
    <property type="entry name" value="Translation factors"/>
    <property type="match status" value="2"/>
</dbReference>
<dbReference type="HAMAP" id="MF_00118_B">
    <property type="entry name" value="EF_Tu_B"/>
    <property type="match status" value="1"/>
</dbReference>
<dbReference type="InterPro" id="IPR041709">
    <property type="entry name" value="EF-Tu_GTP-bd"/>
</dbReference>
<dbReference type="InterPro" id="IPR050055">
    <property type="entry name" value="EF-Tu_GTPase"/>
</dbReference>
<dbReference type="InterPro" id="IPR004161">
    <property type="entry name" value="EFTu-like_2"/>
</dbReference>
<dbReference type="InterPro" id="IPR033720">
    <property type="entry name" value="EFTU_2"/>
</dbReference>
<dbReference type="InterPro" id="IPR031157">
    <property type="entry name" value="G_TR_CS"/>
</dbReference>
<dbReference type="InterPro" id="IPR027417">
    <property type="entry name" value="P-loop_NTPase"/>
</dbReference>
<dbReference type="InterPro" id="IPR005225">
    <property type="entry name" value="Small_GTP-bd"/>
</dbReference>
<dbReference type="InterPro" id="IPR000795">
    <property type="entry name" value="T_Tr_GTP-bd_dom"/>
</dbReference>
<dbReference type="InterPro" id="IPR009000">
    <property type="entry name" value="Transl_B-barrel_sf"/>
</dbReference>
<dbReference type="InterPro" id="IPR009001">
    <property type="entry name" value="Transl_elong_EF1A/Init_IF2_C"/>
</dbReference>
<dbReference type="InterPro" id="IPR004541">
    <property type="entry name" value="Transl_elong_EFTu/EF1A_bac/org"/>
</dbReference>
<dbReference type="InterPro" id="IPR004160">
    <property type="entry name" value="Transl_elong_EFTu/EF1A_C"/>
</dbReference>
<dbReference type="NCBIfam" id="TIGR00485">
    <property type="entry name" value="EF-Tu"/>
    <property type="match status" value="1"/>
</dbReference>
<dbReference type="NCBIfam" id="NF000766">
    <property type="entry name" value="PRK00049.1"/>
    <property type="match status" value="1"/>
</dbReference>
<dbReference type="NCBIfam" id="NF009372">
    <property type="entry name" value="PRK12735.1"/>
    <property type="match status" value="1"/>
</dbReference>
<dbReference type="NCBIfam" id="NF009373">
    <property type="entry name" value="PRK12736.1"/>
    <property type="match status" value="1"/>
</dbReference>
<dbReference type="NCBIfam" id="TIGR00231">
    <property type="entry name" value="small_GTP"/>
    <property type="match status" value="1"/>
</dbReference>
<dbReference type="PANTHER" id="PTHR43721:SF22">
    <property type="entry name" value="ELONGATION FACTOR TU, MITOCHONDRIAL"/>
    <property type="match status" value="1"/>
</dbReference>
<dbReference type="PANTHER" id="PTHR43721">
    <property type="entry name" value="ELONGATION FACTOR TU-RELATED"/>
    <property type="match status" value="1"/>
</dbReference>
<dbReference type="Pfam" id="PF00009">
    <property type="entry name" value="GTP_EFTU"/>
    <property type="match status" value="1"/>
</dbReference>
<dbReference type="Pfam" id="PF03144">
    <property type="entry name" value="GTP_EFTU_D2"/>
    <property type="match status" value="1"/>
</dbReference>
<dbReference type="Pfam" id="PF03143">
    <property type="entry name" value="GTP_EFTU_D3"/>
    <property type="match status" value="1"/>
</dbReference>
<dbReference type="PRINTS" id="PR00315">
    <property type="entry name" value="ELONGATNFCT"/>
</dbReference>
<dbReference type="SUPFAM" id="SSF50465">
    <property type="entry name" value="EF-Tu/eEF-1alpha/eIF2-gamma C-terminal domain"/>
    <property type="match status" value="1"/>
</dbReference>
<dbReference type="SUPFAM" id="SSF52540">
    <property type="entry name" value="P-loop containing nucleoside triphosphate hydrolases"/>
    <property type="match status" value="1"/>
</dbReference>
<dbReference type="SUPFAM" id="SSF50447">
    <property type="entry name" value="Translation proteins"/>
    <property type="match status" value="1"/>
</dbReference>
<dbReference type="PROSITE" id="PS00301">
    <property type="entry name" value="G_TR_1"/>
    <property type="match status" value="1"/>
</dbReference>
<dbReference type="PROSITE" id="PS51722">
    <property type="entry name" value="G_TR_2"/>
    <property type="match status" value="1"/>
</dbReference>
<name>EFTU1_CAUSK</name>
<feature type="chain" id="PRO_0000337351" description="Elongation factor Tu 1">
    <location>
        <begin position="1"/>
        <end position="396"/>
    </location>
</feature>
<feature type="domain" description="tr-type G">
    <location>
        <begin position="10"/>
        <end position="206"/>
    </location>
</feature>
<feature type="region of interest" description="G1" evidence="1">
    <location>
        <begin position="19"/>
        <end position="26"/>
    </location>
</feature>
<feature type="region of interest" description="G2" evidence="1">
    <location>
        <begin position="60"/>
        <end position="64"/>
    </location>
</feature>
<feature type="region of interest" description="G3" evidence="1">
    <location>
        <begin position="81"/>
        <end position="84"/>
    </location>
</feature>
<feature type="region of interest" description="G4" evidence="1">
    <location>
        <begin position="136"/>
        <end position="139"/>
    </location>
</feature>
<feature type="region of interest" description="G5" evidence="1">
    <location>
        <begin position="174"/>
        <end position="176"/>
    </location>
</feature>
<feature type="binding site" evidence="2">
    <location>
        <begin position="19"/>
        <end position="26"/>
    </location>
    <ligand>
        <name>GTP</name>
        <dbReference type="ChEBI" id="CHEBI:37565"/>
    </ligand>
</feature>
<feature type="binding site" evidence="2">
    <location>
        <position position="26"/>
    </location>
    <ligand>
        <name>Mg(2+)</name>
        <dbReference type="ChEBI" id="CHEBI:18420"/>
    </ligand>
</feature>
<feature type="binding site" evidence="2">
    <location>
        <begin position="81"/>
        <end position="85"/>
    </location>
    <ligand>
        <name>GTP</name>
        <dbReference type="ChEBI" id="CHEBI:37565"/>
    </ligand>
</feature>
<feature type="binding site" evidence="2">
    <location>
        <begin position="136"/>
        <end position="139"/>
    </location>
    <ligand>
        <name>GTP</name>
        <dbReference type="ChEBI" id="CHEBI:37565"/>
    </ligand>
</feature>
<gene>
    <name evidence="2" type="primary">tuf1</name>
    <name type="ordered locus">Caul_0804</name>
</gene>
<organism>
    <name type="scientific">Caulobacter sp. (strain K31)</name>
    <dbReference type="NCBI Taxonomy" id="366602"/>
    <lineage>
        <taxon>Bacteria</taxon>
        <taxon>Pseudomonadati</taxon>
        <taxon>Pseudomonadota</taxon>
        <taxon>Alphaproteobacteria</taxon>
        <taxon>Caulobacterales</taxon>
        <taxon>Caulobacteraceae</taxon>
        <taxon>Caulobacter</taxon>
    </lineage>
</organism>
<reference key="1">
    <citation type="submission" date="2008-01" db="EMBL/GenBank/DDBJ databases">
        <title>Complete sequence of chromosome of Caulobacter sp. K31.</title>
        <authorList>
            <consortium name="US DOE Joint Genome Institute"/>
            <person name="Copeland A."/>
            <person name="Lucas S."/>
            <person name="Lapidus A."/>
            <person name="Barry K."/>
            <person name="Glavina del Rio T."/>
            <person name="Dalin E."/>
            <person name="Tice H."/>
            <person name="Pitluck S."/>
            <person name="Bruce D."/>
            <person name="Goodwin L."/>
            <person name="Thompson L.S."/>
            <person name="Brettin T."/>
            <person name="Detter J.C."/>
            <person name="Han C."/>
            <person name="Schmutz J."/>
            <person name="Larimer F."/>
            <person name="Land M."/>
            <person name="Hauser L."/>
            <person name="Kyrpides N."/>
            <person name="Kim E."/>
            <person name="Stephens C."/>
            <person name="Richardson P."/>
        </authorList>
    </citation>
    <scope>NUCLEOTIDE SEQUENCE [LARGE SCALE GENOMIC DNA]</scope>
    <source>
        <strain>K31</strain>
    </source>
</reference>
<protein>
    <recommendedName>
        <fullName evidence="2">Elongation factor Tu 1</fullName>
        <shortName evidence="2">EF-Tu 1</shortName>
        <ecNumber evidence="2">3.6.5.3</ecNumber>
    </recommendedName>
</protein>